<comment type="function">
    <text evidence="1">Together with the chaperonin GroEL, plays an essential role in assisting protein folding. The GroEL-GroES system forms a nano-cage that allows encapsulation of the non-native substrate proteins and provides a physical environment optimized to promote and accelerate protein folding. GroES binds to the apical surface of the GroEL ring, thereby capping the opening of the GroEL channel.</text>
</comment>
<comment type="subunit">
    <text evidence="1">Heptamer of 7 subunits arranged in a ring. Interacts with the chaperonin GroEL.</text>
</comment>
<comment type="subcellular location">
    <subcellularLocation>
        <location evidence="1">Cytoplasm</location>
    </subcellularLocation>
</comment>
<comment type="similarity">
    <text evidence="1">Belongs to the GroES chaperonin family.</text>
</comment>
<name>CH10_CHLT2</name>
<accession>B0B9L9</accession>
<reference key="1">
    <citation type="journal article" date="2008" name="Genome Res.">
        <title>Chlamydia trachomatis: genome sequence analysis of lymphogranuloma venereum isolates.</title>
        <authorList>
            <person name="Thomson N.R."/>
            <person name="Holden M.T.G."/>
            <person name="Carder C."/>
            <person name="Lennard N."/>
            <person name="Lockey S.J."/>
            <person name="Marsh P."/>
            <person name="Skipp P."/>
            <person name="O'Connor C.D."/>
            <person name="Goodhead I."/>
            <person name="Norbertzcak H."/>
            <person name="Harris B."/>
            <person name="Ormond D."/>
            <person name="Rance R."/>
            <person name="Quail M.A."/>
            <person name="Parkhill J."/>
            <person name="Stephens R.S."/>
            <person name="Clarke I.N."/>
        </authorList>
    </citation>
    <scope>NUCLEOTIDE SEQUENCE [LARGE SCALE GENOMIC DNA]</scope>
    <source>
        <strain>ATCC VR-902B / DSM 19102 / 434/Bu</strain>
    </source>
</reference>
<protein>
    <recommendedName>
        <fullName evidence="1">Co-chaperonin GroES</fullName>
    </recommendedName>
    <alternativeName>
        <fullName evidence="1">10 kDa chaperonin</fullName>
    </alternativeName>
    <alternativeName>
        <fullName evidence="1">Chaperonin-10</fullName>
        <shortName evidence="1">Cpn10</shortName>
    </alternativeName>
</protein>
<dbReference type="EMBL" id="AM884176">
    <property type="protein sequence ID" value="CAP03806.1"/>
    <property type="molecule type" value="Genomic_DNA"/>
</dbReference>
<dbReference type="RefSeq" id="WP_009873566.1">
    <property type="nucleotide sequence ID" value="NC_010287.1"/>
</dbReference>
<dbReference type="RefSeq" id="YP_001654450.1">
    <property type="nucleotide sequence ID" value="NC_010287.1"/>
</dbReference>
<dbReference type="SMR" id="B0B9L9"/>
<dbReference type="KEGG" id="ctb:CTL0366"/>
<dbReference type="PATRIC" id="fig|471472.4.peg.395"/>
<dbReference type="HOGENOM" id="CLU_132825_2_1_0"/>
<dbReference type="Proteomes" id="UP001154402">
    <property type="component" value="Chromosome"/>
</dbReference>
<dbReference type="GO" id="GO:0005737">
    <property type="term" value="C:cytoplasm"/>
    <property type="evidence" value="ECO:0007669"/>
    <property type="project" value="UniProtKB-SubCell"/>
</dbReference>
<dbReference type="GO" id="GO:0005524">
    <property type="term" value="F:ATP binding"/>
    <property type="evidence" value="ECO:0007669"/>
    <property type="project" value="InterPro"/>
</dbReference>
<dbReference type="GO" id="GO:0046872">
    <property type="term" value="F:metal ion binding"/>
    <property type="evidence" value="ECO:0007669"/>
    <property type="project" value="TreeGrafter"/>
</dbReference>
<dbReference type="GO" id="GO:0044183">
    <property type="term" value="F:protein folding chaperone"/>
    <property type="evidence" value="ECO:0007669"/>
    <property type="project" value="InterPro"/>
</dbReference>
<dbReference type="GO" id="GO:0051087">
    <property type="term" value="F:protein-folding chaperone binding"/>
    <property type="evidence" value="ECO:0007669"/>
    <property type="project" value="TreeGrafter"/>
</dbReference>
<dbReference type="GO" id="GO:0051082">
    <property type="term" value="F:unfolded protein binding"/>
    <property type="evidence" value="ECO:0007669"/>
    <property type="project" value="TreeGrafter"/>
</dbReference>
<dbReference type="GO" id="GO:0051085">
    <property type="term" value="P:chaperone cofactor-dependent protein refolding"/>
    <property type="evidence" value="ECO:0007669"/>
    <property type="project" value="TreeGrafter"/>
</dbReference>
<dbReference type="CDD" id="cd00320">
    <property type="entry name" value="cpn10"/>
    <property type="match status" value="1"/>
</dbReference>
<dbReference type="FunFam" id="2.30.33.40:FF:000007">
    <property type="entry name" value="10 kDa chaperonin"/>
    <property type="match status" value="1"/>
</dbReference>
<dbReference type="Gene3D" id="2.30.33.40">
    <property type="entry name" value="GroES chaperonin"/>
    <property type="match status" value="1"/>
</dbReference>
<dbReference type="HAMAP" id="MF_00580">
    <property type="entry name" value="CH10"/>
    <property type="match status" value="1"/>
</dbReference>
<dbReference type="InterPro" id="IPR020818">
    <property type="entry name" value="Chaperonin_GroES"/>
</dbReference>
<dbReference type="InterPro" id="IPR037124">
    <property type="entry name" value="Chaperonin_GroES_sf"/>
</dbReference>
<dbReference type="InterPro" id="IPR018369">
    <property type="entry name" value="Chaprnonin_Cpn10_CS"/>
</dbReference>
<dbReference type="InterPro" id="IPR011032">
    <property type="entry name" value="GroES-like_sf"/>
</dbReference>
<dbReference type="NCBIfam" id="NF001531">
    <property type="entry name" value="PRK00364.2-2"/>
    <property type="match status" value="1"/>
</dbReference>
<dbReference type="NCBIfam" id="NF001533">
    <property type="entry name" value="PRK00364.2-4"/>
    <property type="match status" value="1"/>
</dbReference>
<dbReference type="PANTHER" id="PTHR10772">
    <property type="entry name" value="10 KDA HEAT SHOCK PROTEIN"/>
    <property type="match status" value="1"/>
</dbReference>
<dbReference type="PANTHER" id="PTHR10772:SF58">
    <property type="entry name" value="CO-CHAPERONIN GROES"/>
    <property type="match status" value="1"/>
</dbReference>
<dbReference type="Pfam" id="PF00166">
    <property type="entry name" value="Cpn10"/>
    <property type="match status" value="1"/>
</dbReference>
<dbReference type="PRINTS" id="PR00297">
    <property type="entry name" value="CHAPERONIN10"/>
</dbReference>
<dbReference type="SMART" id="SM00883">
    <property type="entry name" value="Cpn10"/>
    <property type="match status" value="1"/>
</dbReference>
<dbReference type="SUPFAM" id="SSF50129">
    <property type="entry name" value="GroES-like"/>
    <property type="match status" value="1"/>
</dbReference>
<dbReference type="PROSITE" id="PS00681">
    <property type="entry name" value="CHAPERONINS_CPN10"/>
    <property type="match status" value="1"/>
</dbReference>
<proteinExistence type="inferred from homology"/>
<gene>
    <name evidence="1" type="primary">groES</name>
    <name evidence="1" type="synonym">groS</name>
    <name type="ordered locus">CTL0366</name>
</gene>
<keyword id="KW-0143">Chaperone</keyword>
<keyword id="KW-0963">Cytoplasm</keyword>
<sequence length="102" mass="11169">MSDQATTLKIKPLGDRILVKREEEASTARGGIILPDTAKKKQDRAEVVALGTGKKDDKGQQLPFEVQVGDIVLIDKYSGQELTVEGEEYVIVQMSEVIAVLQ</sequence>
<organism>
    <name type="scientific">Chlamydia trachomatis serovar L2 (strain ATCC VR-902B / DSM 19102 / 434/Bu)</name>
    <dbReference type="NCBI Taxonomy" id="471472"/>
    <lineage>
        <taxon>Bacteria</taxon>
        <taxon>Pseudomonadati</taxon>
        <taxon>Chlamydiota</taxon>
        <taxon>Chlamydiia</taxon>
        <taxon>Chlamydiales</taxon>
        <taxon>Chlamydiaceae</taxon>
        <taxon>Chlamydia/Chlamydophila group</taxon>
        <taxon>Chlamydia</taxon>
    </lineage>
</organism>
<feature type="chain" id="PRO_1000129637" description="Co-chaperonin GroES">
    <location>
        <begin position="1"/>
        <end position="102"/>
    </location>
</feature>
<evidence type="ECO:0000255" key="1">
    <source>
        <dbReference type="HAMAP-Rule" id="MF_00580"/>
    </source>
</evidence>